<proteinExistence type="inferred from homology"/>
<reference key="1">
    <citation type="journal article" date="2002" name="Nature">
        <title>The genome sequence of Schizosaccharomyces pombe.</title>
        <authorList>
            <person name="Wood V."/>
            <person name="Gwilliam R."/>
            <person name="Rajandream M.A."/>
            <person name="Lyne M.H."/>
            <person name="Lyne R."/>
            <person name="Stewart A."/>
            <person name="Sgouros J.G."/>
            <person name="Peat N."/>
            <person name="Hayles J."/>
            <person name="Baker S.G."/>
            <person name="Basham D."/>
            <person name="Bowman S."/>
            <person name="Brooks K."/>
            <person name="Brown D."/>
            <person name="Brown S."/>
            <person name="Chillingworth T."/>
            <person name="Churcher C.M."/>
            <person name="Collins M."/>
            <person name="Connor R."/>
            <person name="Cronin A."/>
            <person name="Davis P."/>
            <person name="Feltwell T."/>
            <person name="Fraser A."/>
            <person name="Gentles S."/>
            <person name="Goble A."/>
            <person name="Hamlin N."/>
            <person name="Harris D.E."/>
            <person name="Hidalgo J."/>
            <person name="Hodgson G."/>
            <person name="Holroyd S."/>
            <person name="Hornsby T."/>
            <person name="Howarth S."/>
            <person name="Huckle E.J."/>
            <person name="Hunt S."/>
            <person name="Jagels K."/>
            <person name="James K.D."/>
            <person name="Jones L."/>
            <person name="Jones M."/>
            <person name="Leather S."/>
            <person name="McDonald S."/>
            <person name="McLean J."/>
            <person name="Mooney P."/>
            <person name="Moule S."/>
            <person name="Mungall K.L."/>
            <person name="Murphy L.D."/>
            <person name="Niblett D."/>
            <person name="Odell C."/>
            <person name="Oliver K."/>
            <person name="O'Neil S."/>
            <person name="Pearson D."/>
            <person name="Quail M.A."/>
            <person name="Rabbinowitsch E."/>
            <person name="Rutherford K.M."/>
            <person name="Rutter S."/>
            <person name="Saunders D."/>
            <person name="Seeger K."/>
            <person name="Sharp S."/>
            <person name="Skelton J."/>
            <person name="Simmonds M.N."/>
            <person name="Squares R."/>
            <person name="Squares S."/>
            <person name="Stevens K."/>
            <person name="Taylor K."/>
            <person name="Taylor R.G."/>
            <person name="Tivey A."/>
            <person name="Walsh S.V."/>
            <person name="Warren T."/>
            <person name="Whitehead S."/>
            <person name="Woodward J.R."/>
            <person name="Volckaert G."/>
            <person name="Aert R."/>
            <person name="Robben J."/>
            <person name="Grymonprez B."/>
            <person name="Weltjens I."/>
            <person name="Vanstreels E."/>
            <person name="Rieger M."/>
            <person name="Schaefer M."/>
            <person name="Mueller-Auer S."/>
            <person name="Gabel C."/>
            <person name="Fuchs M."/>
            <person name="Duesterhoeft A."/>
            <person name="Fritzc C."/>
            <person name="Holzer E."/>
            <person name="Moestl D."/>
            <person name="Hilbert H."/>
            <person name="Borzym K."/>
            <person name="Langer I."/>
            <person name="Beck A."/>
            <person name="Lehrach H."/>
            <person name="Reinhardt R."/>
            <person name="Pohl T.M."/>
            <person name="Eger P."/>
            <person name="Zimmermann W."/>
            <person name="Wedler H."/>
            <person name="Wambutt R."/>
            <person name="Purnelle B."/>
            <person name="Goffeau A."/>
            <person name="Cadieu E."/>
            <person name="Dreano S."/>
            <person name="Gloux S."/>
            <person name="Lelaure V."/>
            <person name="Mottier S."/>
            <person name="Galibert F."/>
            <person name="Aves S.J."/>
            <person name="Xiang Z."/>
            <person name="Hunt C."/>
            <person name="Moore K."/>
            <person name="Hurst S.M."/>
            <person name="Lucas M."/>
            <person name="Rochet M."/>
            <person name="Gaillardin C."/>
            <person name="Tallada V.A."/>
            <person name="Garzon A."/>
            <person name="Thode G."/>
            <person name="Daga R.R."/>
            <person name="Cruzado L."/>
            <person name="Jimenez J."/>
            <person name="Sanchez M."/>
            <person name="del Rey F."/>
            <person name="Benito J."/>
            <person name="Dominguez A."/>
            <person name="Revuelta J.L."/>
            <person name="Moreno S."/>
            <person name="Armstrong J."/>
            <person name="Forsburg S.L."/>
            <person name="Cerutti L."/>
            <person name="Lowe T."/>
            <person name="McCombie W.R."/>
            <person name="Paulsen I."/>
            <person name="Potashkin J."/>
            <person name="Shpakovski G.V."/>
            <person name="Ussery D."/>
            <person name="Barrell B.G."/>
            <person name="Nurse P."/>
        </authorList>
    </citation>
    <scope>NUCLEOTIDE SEQUENCE [LARGE SCALE GENOMIC DNA]</scope>
    <source>
        <strain>972 / ATCC 24843</strain>
    </source>
</reference>
<comment type="function">
    <text evidence="1">Essential component of the PAM complex, a complex required for the translocation of transit peptide-containing proteins from the inner membrane into the mitochondrial matrix in an ATP-dependent manner. In the complex, it is required to stimulate activity of mtHSP70 (ssc1) (By similarity).</text>
</comment>
<comment type="subunit">
    <text evidence="1">Heterodimer with pam16. Component of the PAM complex, at least composed of mtHsp70, mge1, tim44, pam16, pam17 and pam18 (By similarity).</text>
</comment>
<comment type="subcellular location">
    <subcellularLocation>
        <location evidence="1">Mitochondrion inner membrane</location>
        <topology evidence="1">Single-pass membrane protein</topology>
    </subcellularLocation>
</comment>
<comment type="domain">
    <text evidence="1">The J domain is essential for co-chaperone activity and mediates the heterodimerization with the J-like domain of PAM16.</text>
</comment>
<comment type="similarity">
    <text evidence="4">Belongs to the TIM14 family.</text>
</comment>
<feature type="chain" id="PRO_0000071116" description="Mitochondrial import inner membrane translocase subunit tim14">
    <location>
        <begin position="1"/>
        <end position="140"/>
    </location>
</feature>
<feature type="topological domain" description="Mitochondrial intermembrane" evidence="2">
    <location>
        <begin position="1"/>
        <end position="6"/>
    </location>
</feature>
<feature type="transmembrane region" description="Helical" evidence="2">
    <location>
        <begin position="7"/>
        <end position="23"/>
    </location>
</feature>
<feature type="topological domain" description="Mitochondrial matrix" evidence="2">
    <location>
        <begin position="24"/>
        <end position="140"/>
    </location>
</feature>
<feature type="domain" description="J" evidence="3">
    <location>
        <begin position="51"/>
        <end position="113"/>
    </location>
</feature>
<evidence type="ECO:0000250" key="1"/>
<evidence type="ECO:0000255" key="2"/>
<evidence type="ECO:0000255" key="3">
    <source>
        <dbReference type="PROSITE-ProRule" id="PRU00286"/>
    </source>
</evidence>
<evidence type="ECO:0000305" key="4"/>
<dbReference type="EMBL" id="CU329670">
    <property type="protein sequence ID" value="CAB57336.1"/>
    <property type="molecule type" value="Genomic_DNA"/>
</dbReference>
<dbReference type="PIR" id="T39107">
    <property type="entry name" value="T39107"/>
</dbReference>
<dbReference type="RefSeq" id="NP_593445.1">
    <property type="nucleotide sequence ID" value="NM_001018878.2"/>
</dbReference>
<dbReference type="SMR" id="Q9UT37"/>
<dbReference type="BioGRID" id="279229">
    <property type="interactions" value="1"/>
</dbReference>
<dbReference type="FunCoup" id="Q9UT37">
    <property type="interactions" value="158"/>
</dbReference>
<dbReference type="STRING" id="284812.Q9UT37"/>
<dbReference type="iPTMnet" id="Q9UT37"/>
<dbReference type="PaxDb" id="4896-SPAC824.06.1"/>
<dbReference type="EnsemblFungi" id="SPAC824.06.1">
    <property type="protein sequence ID" value="SPAC824.06.1:pep"/>
    <property type="gene ID" value="SPAC824.06"/>
</dbReference>
<dbReference type="GeneID" id="2542780"/>
<dbReference type="KEGG" id="spo:2542780"/>
<dbReference type="PomBase" id="SPAC824.06"/>
<dbReference type="VEuPathDB" id="FungiDB:SPAC824.06"/>
<dbReference type="eggNOG" id="KOG0723">
    <property type="taxonomic scope" value="Eukaryota"/>
</dbReference>
<dbReference type="HOGENOM" id="CLU_017633_13_3_1"/>
<dbReference type="InParanoid" id="Q9UT37"/>
<dbReference type="OMA" id="EPRMNKR"/>
<dbReference type="PhylomeDB" id="Q9UT37"/>
<dbReference type="PRO" id="PR:Q9UT37"/>
<dbReference type="Proteomes" id="UP000002485">
    <property type="component" value="Chromosome I"/>
</dbReference>
<dbReference type="GO" id="GO:0005739">
    <property type="term" value="C:mitochondrion"/>
    <property type="evidence" value="ECO:0007005"/>
    <property type="project" value="PomBase"/>
</dbReference>
<dbReference type="GO" id="GO:0001405">
    <property type="term" value="C:PAM complex, Tim23 associated import motor"/>
    <property type="evidence" value="ECO:0000318"/>
    <property type="project" value="GO_Central"/>
</dbReference>
<dbReference type="GO" id="GO:0016887">
    <property type="term" value="F:ATP hydrolysis activity"/>
    <property type="evidence" value="ECO:0000305"/>
    <property type="project" value="PomBase"/>
</dbReference>
<dbReference type="GO" id="GO:0001671">
    <property type="term" value="F:ATPase activator activity"/>
    <property type="evidence" value="ECO:0000318"/>
    <property type="project" value="GO_Central"/>
</dbReference>
<dbReference type="GO" id="GO:0030544">
    <property type="term" value="F:Hsp70 protein binding"/>
    <property type="evidence" value="ECO:0000255"/>
    <property type="project" value="PomBase"/>
</dbReference>
<dbReference type="GO" id="GO:0051082">
    <property type="term" value="F:unfolded protein binding"/>
    <property type="evidence" value="ECO:0000266"/>
    <property type="project" value="PomBase"/>
</dbReference>
<dbReference type="GO" id="GO:0030150">
    <property type="term" value="P:protein import into mitochondrial matrix"/>
    <property type="evidence" value="ECO:0000266"/>
    <property type="project" value="PomBase"/>
</dbReference>
<dbReference type="CDD" id="cd06257">
    <property type="entry name" value="DnaJ"/>
    <property type="match status" value="1"/>
</dbReference>
<dbReference type="FunFam" id="1.10.287.110:FF:000001">
    <property type="entry name" value="Import inner membrane translocase subunit tim14"/>
    <property type="match status" value="1"/>
</dbReference>
<dbReference type="Gene3D" id="1.10.287.110">
    <property type="entry name" value="DnaJ domain"/>
    <property type="match status" value="1"/>
</dbReference>
<dbReference type="InterPro" id="IPR001623">
    <property type="entry name" value="DnaJ_domain"/>
</dbReference>
<dbReference type="InterPro" id="IPR036869">
    <property type="entry name" value="J_dom_sf"/>
</dbReference>
<dbReference type="PANTHER" id="PTHR12763">
    <property type="match status" value="1"/>
</dbReference>
<dbReference type="PANTHER" id="PTHR12763:SF28">
    <property type="entry name" value="GEO10507P1-RELATED"/>
    <property type="match status" value="1"/>
</dbReference>
<dbReference type="SMART" id="SM00271">
    <property type="entry name" value="DnaJ"/>
    <property type="match status" value="1"/>
</dbReference>
<dbReference type="SUPFAM" id="SSF46565">
    <property type="entry name" value="Chaperone J-domain"/>
    <property type="match status" value="1"/>
</dbReference>
<dbReference type="PROSITE" id="PS50076">
    <property type="entry name" value="DNAJ_2"/>
    <property type="match status" value="1"/>
</dbReference>
<accession>Q9UT37</accession>
<sequence length="140" mass="15271">MSSAILLGVGIAATAAAGKIGVDAFRKYRNLNGGVKAFLKGGFESKMSRAEAIQILSLNNRTLTRQKIKEAHRRLMLANHPDRGGSPYVASKVNEAKSLLDADRSIRKFSSWALPVSKQRSMPSVLEAVKWLEYSSIPKA</sequence>
<keyword id="KW-0143">Chaperone</keyword>
<keyword id="KW-0472">Membrane</keyword>
<keyword id="KW-0496">Mitochondrion</keyword>
<keyword id="KW-0999">Mitochondrion inner membrane</keyword>
<keyword id="KW-0653">Protein transport</keyword>
<keyword id="KW-1185">Reference proteome</keyword>
<keyword id="KW-0811">Translocation</keyword>
<keyword id="KW-0812">Transmembrane</keyword>
<keyword id="KW-1133">Transmembrane helix</keyword>
<keyword id="KW-0813">Transport</keyword>
<protein>
    <recommendedName>
        <fullName>Mitochondrial import inner membrane translocase subunit tim14</fullName>
    </recommendedName>
    <alternativeName>
        <fullName>Presequence translocated-associated motor subunit pam18</fullName>
    </alternativeName>
</protein>
<name>TIM14_SCHPO</name>
<gene>
    <name type="primary">pam18</name>
    <name type="synonym">tim14</name>
    <name type="ORF">SPAC824.06</name>
</gene>
<organism>
    <name type="scientific">Schizosaccharomyces pombe (strain 972 / ATCC 24843)</name>
    <name type="common">Fission yeast</name>
    <dbReference type="NCBI Taxonomy" id="284812"/>
    <lineage>
        <taxon>Eukaryota</taxon>
        <taxon>Fungi</taxon>
        <taxon>Dikarya</taxon>
        <taxon>Ascomycota</taxon>
        <taxon>Taphrinomycotina</taxon>
        <taxon>Schizosaccharomycetes</taxon>
        <taxon>Schizosaccharomycetales</taxon>
        <taxon>Schizosaccharomycetaceae</taxon>
        <taxon>Schizosaccharomyces</taxon>
    </lineage>
</organism>